<evidence type="ECO:0000255" key="1">
    <source>
        <dbReference type="HAMAP-Rule" id="MF_01690"/>
    </source>
</evidence>
<evidence type="ECO:0000256" key="2">
    <source>
        <dbReference type="SAM" id="MobiDB-lite"/>
    </source>
</evidence>
<name>DAPE_PSYA2</name>
<dbReference type="EC" id="3.5.1.18" evidence="1"/>
<dbReference type="EMBL" id="CP000082">
    <property type="protein sequence ID" value="AAZ18422.1"/>
    <property type="molecule type" value="Genomic_DNA"/>
</dbReference>
<dbReference type="RefSeq" id="WP_011279851.1">
    <property type="nucleotide sequence ID" value="NC_007204.1"/>
</dbReference>
<dbReference type="SMR" id="Q4FU86"/>
<dbReference type="STRING" id="259536.Psyc_0561"/>
<dbReference type="KEGG" id="par:Psyc_0561"/>
<dbReference type="eggNOG" id="COG0624">
    <property type="taxonomic scope" value="Bacteria"/>
</dbReference>
<dbReference type="HOGENOM" id="CLU_021802_4_0_6"/>
<dbReference type="OrthoDB" id="9809784at2"/>
<dbReference type="UniPathway" id="UPA00034">
    <property type="reaction ID" value="UER00021"/>
</dbReference>
<dbReference type="Proteomes" id="UP000000546">
    <property type="component" value="Chromosome"/>
</dbReference>
<dbReference type="GO" id="GO:0008777">
    <property type="term" value="F:acetylornithine deacetylase activity"/>
    <property type="evidence" value="ECO:0007669"/>
    <property type="project" value="TreeGrafter"/>
</dbReference>
<dbReference type="GO" id="GO:0050897">
    <property type="term" value="F:cobalt ion binding"/>
    <property type="evidence" value="ECO:0007669"/>
    <property type="project" value="UniProtKB-UniRule"/>
</dbReference>
<dbReference type="GO" id="GO:0009014">
    <property type="term" value="F:succinyl-diaminopimelate desuccinylase activity"/>
    <property type="evidence" value="ECO:0007669"/>
    <property type="project" value="UniProtKB-UniRule"/>
</dbReference>
<dbReference type="GO" id="GO:0008270">
    <property type="term" value="F:zinc ion binding"/>
    <property type="evidence" value="ECO:0007669"/>
    <property type="project" value="UniProtKB-UniRule"/>
</dbReference>
<dbReference type="GO" id="GO:0019877">
    <property type="term" value="P:diaminopimelate biosynthetic process"/>
    <property type="evidence" value="ECO:0007669"/>
    <property type="project" value="UniProtKB-UniRule"/>
</dbReference>
<dbReference type="GO" id="GO:0006526">
    <property type="term" value="P:L-arginine biosynthetic process"/>
    <property type="evidence" value="ECO:0007669"/>
    <property type="project" value="TreeGrafter"/>
</dbReference>
<dbReference type="GO" id="GO:0009089">
    <property type="term" value="P:lysine biosynthetic process via diaminopimelate"/>
    <property type="evidence" value="ECO:0007669"/>
    <property type="project" value="UniProtKB-UniRule"/>
</dbReference>
<dbReference type="CDD" id="cd03891">
    <property type="entry name" value="M20_DapE_proteobac"/>
    <property type="match status" value="1"/>
</dbReference>
<dbReference type="FunFam" id="3.30.70.360:FF:000011">
    <property type="entry name" value="Succinyl-diaminopimelate desuccinylase"/>
    <property type="match status" value="1"/>
</dbReference>
<dbReference type="FunFam" id="3.40.630.10:FF:000005">
    <property type="entry name" value="Succinyl-diaminopimelate desuccinylase"/>
    <property type="match status" value="1"/>
</dbReference>
<dbReference type="Gene3D" id="3.40.630.10">
    <property type="entry name" value="Zn peptidases"/>
    <property type="match status" value="2"/>
</dbReference>
<dbReference type="HAMAP" id="MF_01690">
    <property type="entry name" value="DapE"/>
    <property type="match status" value="1"/>
</dbReference>
<dbReference type="InterPro" id="IPR036264">
    <property type="entry name" value="Bact_exopeptidase_dim_dom"/>
</dbReference>
<dbReference type="InterPro" id="IPR005941">
    <property type="entry name" value="DapE_proteobac"/>
</dbReference>
<dbReference type="InterPro" id="IPR002933">
    <property type="entry name" value="Peptidase_M20"/>
</dbReference>
<dbReference type="InterPro" id="IPR011650">
    <property type="entry name" value="Peptidase_M20_dimer"/>
</dbReference>
<dbReference type="InterPro" id="IPR050072">
    <property type="entry name" value="Peptidase_M20A"/>
</dbReference>
<dbReference type="NCBIfam" id="TIGR01246">
    <property type="entry name" value="dapE_proteo"/>
    <property type="match status" value="1"/>
</dbReference>
<dbReference type="NCBIfam" id="NF009557">
    <property type="entry name" value="PRK13009.1"/>
    <property type="match status" value="1"/>
</dbReference>
<dbReference type="PANTHER" id="PTHR43808">
    <property type="entry name" value="ACETYLORNITHINE DEACETYLASE"/>
    <property type="match status" value="1"/>
</dbReference>
<dbReference type="PANTHER" id="PTHR43808:SF31">
    <property type="entry name" value="N-ACETYL-L-CITRULLINE DEACETYLASE"/>
    <property type="match status" value="1"/>
</dbReference>
<dbReference type="Pfam" id="PF07687">
    <property type="entry name" value="M20_dimer"/>
    <property type="match status" value="1"/>
</dbReference>
<dbReference type="Pfam" id="PF01546">
    <property type="entry name" value="Peptidase_M20"/>
    <property type="match status" value="1"/>
</dbReference>
<dbReference type="SUPFAM" id="SSF55031">
    <property type="entry name" value="Bacterial exopeptidase dimerisation domain"/>
    <property type="match status" value="1"/>
</dbReference>
<dbReference type="SUPFAM" id="SSF53187">
    <property type="entry name" value="Zn-dependent exopeptidases"/>
    <property type="match status" value="1"/>
</dbReference>
<sequence length="407" mass="44308">MSDIDNNLTSQTHQQATHQQETLDLSIALLERPSVTPNDDGCQDILSERLTQAGFDCEFMYYGDRQAKGEHAEVKNLWARRGTSNPVICFAGHTDVVPTGDEKNWTYPPFTPTIADGYLWARGAADMKTGIAAFTIAAERFVANHPQHNGSIAFLITSDEEGPSINGTVKVIETLEARQEKITYCLVGEPSSTDTLGDIIKNGRRGSLGAVLTVTGKQGHVAYPHLASNPIHAAMSALSELTNASWDNGNDYFPATSLQISNINGGTGATNVIPETLEVVFNFRFSTETTEDELKAKTHAIFDKYFKDSKAKYDIHWKLSGQPFLTPEGKLVSACQQAIKSVTGTDTTLSTSGGTSDGRFIAPTGAQVVELGVRNATIHQVDEKVEVDDLGRLAQIYERILENLLLD</sequence>
<accession>Q4FU86</accession>
<reference key="1">
    <citation type="journal article" date="2010" name="Appl. Environ. Microbiol.">
        <title>The genome sequence of Psychrobacter arcticus 273-4, a psychroactive Siberian permafrost bacterium, reveals mechanisms for adaptation to low-temperature growth.</title>
        <authorList>
            <person name="Ayala-del-Rio H.L."/>
            <person name="Chain P.S."/>
            <person name="Grzymski J.J."/>
            <person name="Ponder M.A."/>
            <person name="Ivanova N."/>
            <person name="Bergholz P.W."/>
            <person name="Di Bartolo G."/>
            <person name="Hauser L."/>
            <person name="Land M."/>
            <person name="Bakermans C."/>
            <person name="Rodrigues D."/>
            <person name="Klappenbach J."/>
            <person name="Zarka D."/>
            <person name="Larimer F."/>
            <person name="Richardson P."/>
            <person name="Murray A."/>
            <person name="Thomashow M."/>
            <person name="Tiedje J.M."/>
        </authorList>
    </citation>
    <scope>NUCLEOTIDE SEQUENCE [LARGE SCALE GENOMIC DNA]</scope>
    <source>
        <strain>DSM 17307 / VKM B-2377 / 273-4</strain>
    </source>
</reference>
<organism>
    <name type="scientific">Psychrobacter arcticus (strain DSM 17307 / VKM B-2377 / 273-4)</name>
    <dbReference type="NCBI Taxonomy" id="259536"/>
    <lineage>
        <taxon>Bacteria</taxon>
        <taxon>Pseudomonadati</taxon>
        <taxon>Pseudomonadota</taxon>
        <taxon>Gammaproteobacteria</taxon>
        <taxon>Moraxellales</taxon>
        <taxon>Moraxellaceae</taxon>
        <taxon>Psychrobacter</taxon>
    </lineage>
</organism>
<protein>
    <recommendedName>
        <fullName evidence="1">Succinyl-diaminopimelate desuccinylase</fullName>
        <shortName evidence="1">SDAP desuccinylase</shortName>
        <ecNumber evidence="1">3.5.1.18</ecNumber>
    </recommendedName>
    <alternativeName>
        <fullName evidence="1">N-succinyl-LL-2,6-diaminoheptanedioate amidohydrolase</fullName>
    </alternativeName>
</protein>
<feature type="chain" id="PRO_0000375670" description="Succinyl-diaminopimelate desuccinylase">
    <location>
        <begin position="1"/>
        <end position="407"/>
    </location>
</feature>
<feature type="region of interest" description="Disordered" evidence="2">
    <location>
        <begin position="1"/>
        <end position="20"/>
    </location>
</feature>
<feature type="compositionally biased region" description="Polar residues" evidence="2">
    <location>
        <begin position="1"/>
        <end position="10"/>
    </location>
</feature>
<feature type="compositionally biased region" description="Low complexity" evidence="2">
    <location>
        <begin position="11"/>
        <end position="20"/>
    </location>
</feature>
<feature type="active site" evidence="1">
    <location>
        <position position="95"/>
    </location>
</feature>
<feature type="active site" description="Proton acceptor" evidence="1">
    <location>
        <position position="160"/>
    </location>
</feature>
<feature type="binding site" evidence="1">
    <location>
        <position position="93"/>
    </location>
    <ligand>
        <name>Zn(2+)</name>
        <dbReference type="ChEBI" id="CHEBI:29105"/>
        <label>1</label>
    </ligand>
</feature>
<feature type="binding site" evidence="1">
    <location>
        <position position="126"/>
    </location>
    <ligand>
        <name>Zn(2+)</name>
        <dbReference type="ChEBI" id="CHEBI:29105"/>
        <label>1</label>
    </ligand>
</feature>
<feature type="binding site" evidence="1">
    <location>
        <position position="126"/>
    </location>
    <ligand>
        <name>Zn(2+)</name>
        <dbReference type="ChEBI" id="CHEBI:29105"/>
        <label>2</label>
    </ligand>
</feature>
<feature type="binding site" evidence="1">
    <location>
        <position position="161"/>
    </location>
    <ligand>
        <name>Zn(2+)</name>
        <dbReference type="ChEBI" id="CHEBI:29105"/>
        <label>2</label>
    </ligand>
</feature>
<feature type="binding site" evidence="1">
    <location>
        <position position="189"/>
    </location>
    <ligand>
        <name>Zn(2+)</name>
        <dbReference type="ChEBI" id="CHEBI:29105"/>
        <label>1</label>
    </ligand>
</feature>
<feature type="binding site" evidence="1">
    <location>
        <position position="379"/>
    </location>
    <ligand>
        <name>Zn(2+)</name>
        <dbReference type="ChEBI" id="CHEBI:29105"/>
        <label>2</label>
    </ligand>
</feature>
<keyword id="KW-0028">Amino-acid biosynthesis</keyword>
<keyword id="KW-0170">Cobalt</keyword>
<keyword id="KW-0220">Diaminopimelate biosynthesis</keyword>
<keyword id="KW-0378">Hydrolase</keyword>
<keyword id="KW-0457">Lysine biosynthesis</keyword>
<keyword id="KW-0479">Metal-binding</keyword>
<keyword id="KW-1185">Reference proteome</keyword>
<keyword id="KW-0862">Zinc</keyword>
<comment type="function">
    <text evidence="1">Catalyzes the hydrolysis of N-succinyl-L,L-diaminopimelic acid (SDAP), forming succinate and LL-2,6-diaminopimelate (DAP), an intermediate involved in the bacterial biosynthesis of lysine and meso-diaminopimelic acid, an essential component of bacterial cell walls.</text>
</comment>
<comment type="catalytic activity">
    <reaction evidence="1">
        <text>N-succinyl-(2S,6S)-2,6-diaminopimelate + H2O = (2S,6S)-2,6-diaminopimelate + succinate</text>
        <dbReference type="Rhea" id="RHEA:22608"/>
        <dbReference type="ChEBI" id="CHEBI:15377"/>
        <dbReference type="ChEBI" id="CHEBI:30031"/>
        <dbReference type="ChEBI" id="CHEBI:57609"/>
        <dbReference type="ChEBI" id="CHEBI:58087"/>
        <dbReference type="EC" id="3.5.1.18"/>
    </reaction>
</comment>
<comment type="cofactor">
    <cofactor evidence="1">
        <name>Zn(2+)</name>
        <dbReference type="ChEBI" id="CHEBI:29105"/>
    </cofactor>
    <cofactor evidence="1">
        <name>Co(2+)</name>
        <dbReference type="ChEBI" id="CHEBI:48828"/>
    </cofactor>
    <text evidence="1">Binds 2 Zn(2+) or Co(2+) ions per subunit.</text>
</comment>
<comment type="pathway">
    <text evidence="1">Amino-acid biosynthesis; L-lysine biosynthesis via DAP pathway; LL-2,6-diaminopimelate from (S)-tetrahydrodipicolinate (succinylase route): step 3/3.</text>
</comment>
<comment type="subunit">
    <text evidence="1">Homodimer.</text>
</comment>
<comment type="similarity">
    <text evidence="1">Belongs to the peptidase M20A family. DapE subfamily.</text>
</comment>
<gene>
    <name evidence="1" type="primary">dapE</name>
    <name type="ordered locus">Psyc_0561</name>
</gene>
<proteinExistence type="inferred from homology"/>